<feature type="signal peptide" evidence="2">
    <location>
        <begin position="1"/>
        <end position="21"/>
    </location>
</feature>
<feature type="propeptide" id="PRO_0000282871" evidence="1">
    <location>
        <begin position="22"/>
        <end position="47"/>
    </location>
</feature>
<feature type="chain" id="PRO_0000282872" description="Lysosomal Pro-X carboxypeptidase">
    <location>
        <begin position="48"/>
        <end position="499"/>
    </location>
</feature>
<feature type="region of interest" description="SKS domain" evidence="1">
    <location>
        <begin position="196"/>
        <end position="337"/>
    </location>
</feature>
<feature type="active site" description="Charge relay system" evidence="2">
    <location>
        <position position="181"/>
    </location>
</feature>
<feature type="active site" description="Charge relay system" evidence="2">
    <location>
        <position position="433"/>
    </location>
</feature>
<feature type="active site" description="Charge relay system" evidence="2">
    <location>
        <position position="458"/>
    </location>
</feature>
<feature type="glycosylation site" description="N-linked (GlcNAc...) asparagine" evidence="2">
    <location>
        <position position="103"/>
    </location>
</feature>
<feature type="glycosylation site" description="N-linked (GlcNAc...) asparagine" evidence="2">
    <location>
        <position position="234"/>
    </location>
</feature>
<feature type="glycosylation site" description="N-linked (GlcNAc...) asparagine" evidence="2">
    <location>
        <position position="339"/>
    </location>
</feature>
<feature type="glycosylation site" description="N-linked (GlcNAc...) asparagine" evidence="2">
    <location>
        <position position="348"/>
    </location>
</feature>
<feature type="glycosylation site" description="N-linked (GlcNAc...) asparagine" evidence="2">
    <location>
        <position position="418"/>
    </location>
</feature>
<feature type="disulfide bond" evidence="1">
    <location>
        <begin position="217"/>
        <end position="375"/>
    </location>
</feature>
<feature type="disulfide bond" evidence="1">
    <location>
        <begin position="235"/>
        <end position="313"/>
    </location>
</feature>
<feature type="disulfide bond" evidence="1">
    <location>
        <begin position="266"/>
        <end position="346"/>
    </location>
</feature>
<feature type="disulfide bond" evidence="1">
    <location>
        <begin position="367"/>
        <end position="397"/>
    </location>
</feature>
<dbReference type="EC" id="3.4.16.2"/>
<dbReference type="EMBL" id="BC111171">
    <property type="protein sequence ID" value="AAI11172.1"/>
    <property type="molecule type" value="mRNA"/>
</dbReference>
<dbReference type="RefSeq" id="NP_001033253.1">
    <property type="nucleotide sequence ID" value="NM_001038164.2"/>
</dbReference>
<dbReference type="SMR" id="Q2TA14"/>
<dbReference type="FunCoup" id="Q2TA14">
    <property type="interactions" value="1854"/>
</dbReference>
<dbReference type="STRING" id="9913.ENSBTAP00000045060"/>
<dbReference type="ESTHER" id="bovin-q2ta14">
    <property type="family name" value="Prolylcarboxypeptidase"/>
</dbReference>
<dbReference type="MEROPS" id="S28.001"/>
<dbReference type="GlyCosmos" id="Q2TA14">
    <property type="glycosylation" value="5 sites, No reported glycans"/>
</dbReference>
<dbReference type="GlyGen" id="Q2TA14">
    <property type="glycosylation" value="5 sites"/>
</dbReference>
<dbReference type="PaxDb" id="9913-ENSBTAP00000045060"/>
<dbReference type="GeneID" id="534927"/>
<dbReference type="KEGG" id="bta:534927"/>
<dbReference type="CTD" id="5547"/>
<dbReference type="eggNOG" id="KOG2183">
    <property type="taxonomic scope" value="Eukaryota"/>
</dbReference>
<dbReference type="InParanoid" id="Q2TA14"/>
<dbReference type="OrthoDB" id="2130629at2759"/>
<dbReference type="Proteomes" id="UP000009136">
    <property type="component" value="Unplaced"/>
</dbReference>
<dbReference type="GO" id="GO:0005764">
    <property type="term" value="C:lysosome"/>
    <property type="evidence" value="ECO:0007669"/>
    <property type="project" value="UniProtKB-SubCell"/>
</dbReference>
<dbReference type="GO" id="GO:0008239">
    <property type="term" value="F:dipeptidyl-peptidase activity"/>
    <property type="evidence" value="ECO:0000318"/>
    <property type="project" value="GO_Central"/>
</dbReference>
<dbReference type="GO" id="GO:0004185">
    <property type="term" value="F:serine-type carboxypeptidase activity"/>
    <property type="evidence" value="ECO:0007669"/>
    <property type="project" value="UniProtKB-EC"/>
</dbReference>
<dbReference type="GO" id="GO:0060055">
    <property type="term" value="P:angiogenesis involved in wound healing"/>
    <property type="evidence" value="ECO:0000318"/>
    <property type="project" value="GO_Central"/>
</dbReference>
<dbReference type="GO" id="GO:0003085">
    <property type="term" value="P:negative regulation of systemic arterial blood pressure"/>
    <property type="evidence" value="ECO:0000318"/>
    <property type="project" value="GO_Central"/>
</dbReference>
<dbReference type="GO" id="GO:0006508">
    <property type="term" value="P:proteolysis"/>
    <property type="evidence" value="ECO:0007669"/>
    <property type="project" value="UniProtKB-KW"/>
</dbReference>
<dbReference type="GO" id="GO:0043535">
    <property type="term" value="P:regulation of blood vessel endothelial cell migration"/>
    <property type="evidence" value="ECO:0000315"/>
    <property type="project" value="MGI"/>
</dbReference>
<dbReference type="FunFam" id="1.20.120.980:FF:000002">
    <property type="entry name" value="lysosomal Pro-X carboxypeptidase"/>
    <property type="match status" value="1"/>
</dbReference>
<dbReference type="Gene3D" id="3.40.50.1820">
    <property type="entry name" value="alpha/beta hydrolase"/>
    <property type="match status" value="1"/>
</dbReference>
<dbReference type="Gene3D" id="1.20.120.980">
    <property type="entry name" value="Serine carboxypeptidase S28, SKS domain"/>
    <property type="match status" value="1"/>
</dbReference>
<dbReference type="InterPro" id="IPR029058">
    <property type="entry name" value="AB_hydrolase_fold"/>
</dbReference>
<dbReference type="InterPro" id="IPR008758">
    <property type="entry name" value="Peptidase_S28"/>
</dbReference>
<dbReference type="InterPro" id="IPR042269">
    <property type="entry name" value="Ser_carbopepase_S28_SKS"/>
</dbReference>
<dbReference type="PANTHER" id="PTHR11010:SF38">
    <property type="entry name" value="LYSOSOMAL PRO-X CARBOXYPEPTIDASE"/>
    <property type="match status" value="1"/>
</dbReference>
<dbReference type="PANTHER" id="PTHR11010">
    <property type="entry name" value="PROTEASE S28 PRO-X CARBOXYPEPTIDASE-RELATED"/>
    <property type="match status" value="1"/>
</dbReference>
<dbReference type="Pfam" id="PF05577">
    <property type="entry name" value="Peptidase_S28"/>
    <property type="match status" value="1"/>
</dbReference>
<dbReference type="SUPFAM" id="SSF53474">
    <property type="entry name" value="alpha/beta-Hydrolases"/>
    <property type="match status" value="1"/>
</dbReference>
<reference key="1">
    <citation type="submission" date="2005-12" db="EMBL/GenBank/DDBJ databases">
        <authorList>
            <consortium name="NIH - Mammalian Gene Collection (MGC) project"/>
        </authorList>
    </citation>
    <scope>NUCLEOTIDE SEQUENCE [LARGE SCALE MRNA]</scope>
    <source>
        <strain>Crossbred X Angus</strain>
        <tissue>Liver</tissue>
    </source>
</reference>
<gene>
    <name type="primary">PRCP</name>
</gene>
<evidence type="ECO:0000250" key="1"/>
<evidence type="ECO:0000255" key="2"/>
<evidence type="ECO:0000305" key="3"/>
<name>PCP_BOVIN</name>
<protein>
    <recommendedName>
        <fullName>Lysosomal Pro-X carboxypeptidase</fullName>
        <ecNumber>3.4.16.2</ecNumber>
    </recommendedName>
    <alternativeName>
        <fullName>Proline carboxypeptidase</fullName>
    </alternativeName>
    <alternativeName>
        <fullName>Prolylcarboxypeptidase</fullName>
        <shortName>PRCP</shortName>
    </alternativeName>
</protein>
<keyword id="KW-0121">Carboxypeptidase</keyword>
<keyword id="KW-1015">Disulfide bond</keyword>
<keyword id="KW-0325">Glycoprotein</keyword>
<keyword id="KW-0378">Hydrolase</keyword>
<keyword id="KW-0458">Lysosome</keyword>
<keyword id="KW-0645">Protease</keyword>
<keyword id="KW-1185">Reference proteome</keyword>
<keyword id="KW-0732">Signal</keyword>
<keyword id="KW-0865">Zymogen</keyword>
<accession>Q2TA14</accession>
<proteinExistence type="evidence at transcript level"/>
<organism>
    <name type="scientific">Bos taurus</name>
    <name type="common">Bovine</name>
    <dbReference type="NCBI Taxonomy" id="9913"/>
    <lineage>
        <taxon>Eukaryota</taxon>
        <taxon>Metazoa</taxon>
        <taxon>Chordata</taxon>
        <taxon>Craniata</taxon>
        <taxon>Vertebrata</taxon>
        <taxon>Euteleostomi</taxon>
        <taxon>Mammalia</taxon>
        <taxon>Eutheria</taxon>
        <taxon>Laurasiatheria</taxon>
        <taxon>Artiodactyla</taxon>
        <taxon>Ruminantia</taxon>
        <taxon>Pecora</taxon>
        <taxon>Bovidae</taxon>
        <taxon>Bovinae</taxon>
        <taxon>Bos</taxon>
    </lineage>
</organism>
<comment type="function">
    <text evidence="1">Cleaves C-terminal amino acids linked to proline in peptides such as angiotensin II, III and des-Arg9-bradykinin. This cleavage occurs at acidic pH, but enzymatic activity is retained with some substrates at neutral pH (By similarity).</text>
</comment>
<comment type="catalytic activity">
    <reaction>
        <text>Cleavage of a -Pro-|-Xaa bond to release a C-terminal amino acid.</text>
        <dbReference type="EC" id="3.4.16.2"/>
    </reaction>
</comment>
<comment type="subunit">
    <text evidence="1">Homodimer.</text>
</comment>
<comment type="subcellular location">
    <subcellularLocation>
        <location evidence="1">Lysosome</location>
    </subcellularLocation>
</comment>
<comment type="similarity">
    <text evidence="3">Belongs to the peptidase S28 family.</text>
</comment>
<sequence length="499" mass="56671">MGRCSLLLLLLLIAFLTPGAANPVSPSLRAPSSLPWSTSFRSRPTITLKYSIRYIQQKVDHFGFNIDRTFKQRYLIADNYWKEDGGSILFYTGNEGDIIWFCNNTGFMWDIAEEMKAMLVFAEHRYYGESLPFGADSFSDSRHLNFLTTEQALADFAKLIRYLKRTIPGARNQHVIALGGSYGGMLAAWFRMKYPHLVVGALASSAPIWQFNDLVPCDIFMKIVTTDFSQSGPNCSESIRRSWDAINRLAKKGTGLRWLSEALHLCTPLTKSQDVQRLKDWISETWVNVAMVDYPYESNFLQPLPAWPVKVVCQYFKYSNVPDTVMVQNIFQALNVYYNYSGQAKCLNVSETATSSLGVLGWSYQACTEMVMPTCSDGVDDMFEPHSWNMKEYSDDCFKQWGVRPRPSWIPTMYGGKNISSHTNIIFSNGELDPWSGGGVTKDITDTLLAIVIPNGAHHLDLRASNALDPVSVQLTRSLEVKYMKQWISDFYVRLRKMN</sequence>